<sequence length="148" mass="16126">MKVLLIKDVKGLGKAGEIKEVKDGYGNNFLIGKGFAKAATPDVLRQYEAAQKRKAEELKYEIANLEKLKEELAKVTVVVKKTLGANGSLFGSVSKEEIAAELEKTHHLVVEKKAIDLDTHLKAVGLYDVSIKLGHSINATLKVDVQGE</sequence>
<organism>
    <name type="scientific">Campylobacter concisus (strain 13826)</name>
    <dbReference type="NCBI Taxonomy" id="360104"/>
    <lineage>
        <taxon>Bacteria</taxon>
        <taxon>Pseudomonadati</taxon>
        <taxon>Campylobacterota</taxon>
        <taxon>Epsilonproteobacteria</taxon>
        <taxon>Campylobacterales</taxon>
        <taxon>Campylobacteraceae</taxon>
        <taxon>Campylobacter</taxon>
    </lineage>
</organism>
<accession>A7ZDF3</accession>
<protein>
    <recommendedName>
        <fullName evidence="1">Large ribosomal subunit protein bL9</fullName>
    </recommendedName>
    <alternativeName>
        <fullName evidence="2">50S ribosomal protein L9</fullName>
    </alternativeName>
</protein>
<proteinExistence type="inferred from homology"/>
<name>RL9_CAMC1</name>
<gene>
    <name evidence="1" type="primary">rplI</name>
    <name type="ordered locus">Ccon26_09430</name>
    <name type="ORF">CCC13826_1220</name>
</gene>
<keyword id="KW-0687">Ribonucleoprotein</keyword>
<keyword id="KW-0689">Ribosomal protein</keyword>
<keyword id="KW-0694">RNA-binding</keyword>
<keyword id="KW-0699">rRNA-binding</keyword>
<feature type="chain" id="PRO_1000014758" description="Large ribosomal subunit protein bL9">
    <location>
        <begin position="1"/>
        <end position="148"/>
    </location>
</feature>
<dbReference type="EMBL" id="CP000792">
    <property type="protein sequence ID" value="EAT98682.1"/>
    <property type="molecule type" value="Genomic_DNA"/>
</dbReference>
<dbReference type="RefSeq" id="WP_009293837.1">
    <property type="nucleotide sequence ID" value="NC_009802.2"/>
</dbReference>
<dbReference type="SMR" id="A7ZDF3"/>
<dbReference type="STRING" id="360104.CCC13826_1220"/>
<dbReference type="KEGG" id="cco:CCC13826_1220"/>
<dbReference type="eggNOG" id="COG0359">
    <property type="taxonomic scope" value="Bacteria"/>
</dbReference>
<dbReference type="HOGENOM" id="CLU_078938_3_0_7"/>
<dbReference type="OrthoDB" id="9788336at2"/>
<dbReference type="Proteomes" id="UP000001121">
    <property type="component" value="Chromosome"/>
</dbReference>
<dbReference type="GO" id="GO:1990904">
    <property type="term" value="C:ribonucleoprotein complex"/>
    <property type="evidence" value="ECO:0007669"/>
    <property type="project" value="UniProtKB-KW"/>
</dbReference>
<dbReference type="GO" id="GO:0005840">
    <property type="term" value="C:ribosome"/>
    <property type="evidence" value="ECO:0007669"/>
    <property type="project" value="UniProtKB-KW"/>
</dbReference>
<dbReference type="GO" id="GO:0019843">
    <property type="term" value="F:rRNA binding"/>
    <property type="evidence" value="ECO:0007669"/>
    <property type="project" value="UniProtKB-UniRule"/>
</dbReference>
<dbReference type="GO" id="GO:0003735">
    <property type="term" value="F:structural constituent of ribosome"/>
    <property type="evidence" value="ECO:0007669"/>
    <property type="project" value="InterPro"/>
</dbReference>
<dbReference type="GO" id="GO:0006412">
    <property type="term" value="P:translation"/>
    <property type="evidence" value="ECO:0007669"/>
    <property type="project" value="UniProtKB-UniRule"/>
</dbReference>
<dbReference type="FunFam" id="3.40.5.10:FF:000002">
    <property type="entry name" value="50S ribosomal protein L9"/>
    <property type="match status" value="1"/>
</dbReference>
<dbReference type="Gene3D" id="3.10.430.100">
    <property type="entry name" value="Ribosomal protein L9, C-terminal domain"/>
    <property type="match status" value="1"/>
</dbReference>
<dbReference type="Gene3D" id="3.40.5.10">
    <property type="entry name" value="Ribosomal protein L9, N-terminal domain"/>
    <property type="match status" value="1"/>
</dbReference>
<dbReference type="HAMAP" id="MF_00503">
    <property type="entry name" value="Ribosomal_bL9"/>
    <property type="match status" value="1"/>
</dbReference>
<dbReference type="InterPro" id="IPR000244">
    <property type="entry name" value="Ribosomal_bL9"/>
</dbReference>
<dbReference type="InterPro" id="IPR009027">
    <property type="entry name" value="Ribosomal_bL9/RNase_H1_N"/>
</dbReference>
<dbReference type="InterPro" id="IPR020594">
    <property type="entry name" value="Ribosomal_bL9_bac/chp"/>
</dbReference>
<dbReference type="InterPro" id="IPR020069">
    <property type="entry name" value="Ribosomal_bL9_C"/>
</dbReference>
<dbReference type="InterPro" id="IPR036791">
    <property type="entry name" value="Ribosomal_bL9_C_sf"/>
</dbReference>
<dbReference type="InterPro" id="IPR020070">
    <property type="entry name" value="Ribosomal_bL9_N"/>
</dbReference>
<dbReference type="InterPro" id="IPR036935">
    <property type="entry name" value="Ribosomal_bL9_N_sf"/>
</dbReference>
<dbReference type="NCBIfam" id="TIGR00158">
    <property type="entry name" value="L9"/>
    <property type="match status" value="1"/>
</dbReference>
<dbReference type="PANTHER" id="PTHR21368">
    <property type="entry name" value="50S RIBOSOMAL PROTEIN L9"/>
    <property type="match status" value="1"/>
</dbReference>
<dbReference type="Pfam" id="PF03948">
    <property type="entry name" value="Ribosomal_L9_C"/>
    <property type="match status" value="1"/>
</dbReference>
<dbReference type="Pfam" id="PF01281">
    <property type="entry name" value="Ribosomal_L9_N"/>
    <property type="match status" value="1"/>
</dbReference>
<dbReference type="SUPFAM" id="SSF55658">
    <property type="entry name" value="L9 N-domain-like"/>
    <property type="match status" value="1"/>
</dbReference>
<dbReference type="SUPFAM" id="SSF55653">
    <property type="entry name" value="Ribosomal protein L9 C-domain"/>
    <property type="match status" value="1"/>
</dbReference>
<dbReference type="PROSITE" id="PS00651">
    <property type="entry name" value="RIBOSOMAL_L9"/>
    <property type="match status" value="1"/>
</dbReference>
<evidence type="ECO:0000255" key="1">
    <source>
        <dbReference type="HAMAP-Rule" id="MF_00503"/>
    </source>
</evidence>
<evidence type="ECO:0000305" key="2"/>
<comment type="function">
    <text evidence="1">Binds to the 23S rRNA.</text>
</comment>
<comment type="similarity">
    <text evidence="1">Belongs to the bacterial ribosomal protein bL9 family.</text>
</comment>
<reference key="1">
    <citation type="submission" date="2007-10" db="EMBL/GenBank/DDBJ databases">
        <title>Genome sequence of Campylobacter concisus 13826 isolated from human feces.</title>
        <authorList>
            <person name="Fouts D.E."/>
            <person name="Mongodin E.F."/>
            <person name="Puiu D."/>
            <person name="Sebastian Y."/>
            <person name="Miller W.G."/>
            <person name="Mandrell R.E."/>
            <person name="On S."/>
            <person name="Nelson K.E."/>
        </authorList>
    </citation>
    <scope>NUCLEOTIDE SEQUENCE [LARGE SCALE GENOMIC DNA]</scope>
    <source>
        <strain>13826</strain>
    </source>
</reference>